<proteinExistence type="evidence at protein level"/>
<protein>
    <recommendedName>
        <fullName evidence="3">Small ribosomal subunit protein eS17A</fullName>
    </recommendedName>
    <alternativeName>
        <fullName>40S ribosomal protein S17-A</fullName>
    </alternativeName>
</protein>
<evidence type="ECO:0000250" key="1">
    <source>
        <dbReference type="UniProtKB" id="P02407"/>
    </source>
</evidence>
<evidence type="ECO:0000269" key="2">
    <source>
    </source>
</evidence>
<evidence type="ECO:0000305" key="3"/>
<reference key="1">
    <citation type="journal article" date="2002" name="Nature">
        <title>The genome sequence of Schizosaccharomyces pombe.</title>
        <authorList>
            <person name="Wood V."/>
            <person name="Gwilliam R."/>
            <person name="Rajandream M.A."/>
            <person name="Lyne M.H."/>
            <person name="Lyne R."/>
            <person name="Stewart A."/>
            <person name="Sgouros J.G."/>
            <person name="Peat N."/>
            <person name="Hayles J."/>
            <person name="Baker S.G."/>
            <person name="Basham D."/>
            <person name="Bowman S."/>
            <person name="Brooks K."/>
            <person name="Brown D."/>
            <person name="Brown S."/>
            <person name="Chillingworth T."/>
            <person name="Churcher C.M."/>
            <person name="Collins M."/>
            <person name="Connor R."/>
            <person name="Cronin A."/>
            <person name="Davis P."/>
            <person name="Feltwell T."/>
            <person name="Fraser A."/>
            <person name="Gentles S."/>
            <person name="Goble A."/>
            <person name="Hamlin N."/>
            <person name="Harris D.E."/>
            <person name="Hidalgo J."/>
            <person name="Hodgson G."/>
            <person name="Holroyd S."/>
            <person name="Hornsby T."/>
            <person name="Howarth S."/>
            <person name="Huckle E.J."/>
            <person name="Hunt S."/>
            <person name="Jagels K."/>
            <person name="James K.D."/>
            <person name="Jones L."/>
            <person name="Jones M."/>
            <person name="Leather S."/>
            <person name="McDonald S."/>
            <person name="McLean J."/>
            <person name="Mooney P."/>
            <person name="Moule S."/>
            <person name="Mungall K.L."/>
            <person name="Murphy L.D."/>
            <person name="Niblett D."/>
            <person name="Odell C."/>
            <person name="Oliver K."/>
            <person name="O'Neil S."/>
            <person name="Pearson D."/>
            <person name="Quail M.A."/>
            <person name="Rabbinowitsch E."/>
            <person name="Rutherford K.M."/>
            <person name="Rutter S."/>
            <person name="Saunders D."/>
            <person name="Seeger K."/>
            <person name="Sharp S."/>
            <person name="Skelton J."/>
            <person name="Simmonds M.N."/>
            <person name="Squares R."/>
            <person name="Squares S."/>
            <person name="Stevens K."/>
            <person name="Taylor K."/>
            <person name="Taylor R.G."/>
            <person name="Tivey A."/>
            <person name="Walsh S.V."/>
            <person name="Warren T."/>
            <person name="Whitehead S."/>
            <person name="Woodward J.R."/>
            <person name="Volckaert G."/>
            <person name="Aert R."/>
            <person name="Robben J."/>
            <person name="Grymonprez B."/>
            <person name="Weltjens I."/>
            <person name="Vanstreels E."/>
            <person name="Rieger M."/>
            <person name="Schaefer M."/>
            <person name="Mueller-Auer S."/>
            <person name="Gabel C."/>
            <person name="Fuchs M."/>
            <person name="Duesterhoeft A."/>
            <person name="Fritzc C."/>
            <person name="Holzer E."/>
            <person name="Moestl D."/>
            <person name="Hilbert H."/>
            <person name="Borzym K."/>
            <person name="Langer I."/>
            <person name="Beck A."/>
            <person name="Lehrach H."/>
            <person name="Reinhardt R."/>
            <person name="Pohl T.M."/>
            <person name="Eger P."/>
            <person name="Zimmermann W."/>
            <person name="Wedler H."/>
            <person name="Wambutt R."/>
            <person name="Purnelle B."/>
            <person name="Goffeau A."/>
            <person name="Cadieu E."/>
            <person name="Dreano S."/>
            <person name="Gloux S."/>
            <person name="Lelaure V."/>
            <person name="Mottier S."/>
            <person name="Galibert F."/>
            <person name="Aves S.J."/>
            <person name="Xiang Z."/>
            <person name="Hunt C."/>
            <person name="Moore K."/>
            <person name="Hurst S.M."/>
            <person name="Lucas M."/>
            <person name="Rochet M."/>
            <person name="Gaillardin C."/>
            <person name="Tallada V.A."/>
            <person name="Garzon A."/>
            <person name="Thode G."/>
            <person name="Daga R.R."/>
            <person name="Cruzado L."/>
            <person name="Jimenez J."/>
            <person name="Sanchez M."/>
            <person name="del Rey F."/>
            <person name="Benito J."/>
            <person name="Dominguez A."/>
            <person name="Revuelta J.L."/>
            <person name="Moreno S."/>
            <person name="Armstrong J."/>
            <person name="Forsburg S.L."/>
            <person name="Cerutti L."/>
            <person name="Lowe T."/>
            <person name="McCombie W.R."/>
            <person name="Paulsen I."/>
            <person name="Potashkin J."/>
            <person name="Shpakovski G.V."/>
            <person name="Ussery D."/>
            <person name="Barrell B.G."/>
            <person name="Nurse P."/>
        </authorList>
    </citation>
    <scope>NUCLEOTIDE SEQUENCE [LARGE SCALE GENOMIC DNA]</scope>
    <source>
        <strain>972 / ATCC 24843</strain>
    </source>
</reference>
<reference key="2">
    <citation type="journal article" date="2006" name="Nat. Biotechnol.">
        <title>ORFeome cloning and global analysis of protein localization in the fission yeast Schizosaccharomyces pombe.</title>
        <authorList>
            <person name="Matsuyama A."/>
            <person name="Arai R."/>
            <person name="Yashiroda Y."/>
            <person name="Shirai A."/>
            <person name="Kamata A."/>
            <person name="Sekido S."/>
            <person name="Kobayashi Y."/>
            <person name="Hashimoto A."/>
            <person name="Hamamoto M."/>
            <person name="Hiraoka Y."/>
            <person name="Horinouchi S."/>
            <person name="Yoshida M."/>
        </authorList>
    </citation>
    <scope>SUBCELLULAR LOCATION [LARGE SCALE ANALYSIS]</scope>
</reference>
<comment type="function">
    <text evidence="1">Component of the ribosome, a large ribonucleoprotein complex responsible for the synthesis of proteins in the cell. The small ribosomal subunit (SSU) binds messenger RNAs (mRNAs) and translates the encoded message by selecting cognate aminoacyl-transfer RNA (tRNA) molecules. The large subunit (LSU) contains the ribosomal catalytic site termed the peptidyl transferase center (PTC), which catalyzes the formation of peptide bonds, thereby polymerizing the amino acids delivered by tRNAs into a polypeptide chain. The nascent polypeptides leave the ribosome through a tunnel in the LSU and interact with protein factors that function in enzymatic processing, targeting, and the membrane insertion of nascent chains at the exit of the ribosomal tunnel.</text>
</comment>
<comment type="subunit">
    <text evidence="1">Component of the small ribosomal subunit (SSU). Mature yeast ribosomes consist of a small (40S) and a large (60S) subunit. The 40S small subunit contains 1 molecule of ribosomal RNA (18S rRNA) and at least 33 different proteins. The large 60S subunit contains 3 rRNA molecules (25S, 5.8S and 5S rRNA) and at least 46 different proteins.</text>
</comment>
<comment type="subcellular location">
    <subcellularLocation>
        <location evidence="2">Cytoplasm</location>
    </subcellularLocation>
</comment>
<comment type="miscellaneous">
    <text>There are 2 genes for eS17 in S.pombe.</text>
</comment>
<comment type="similarity">
    <text evidence="3">Belongs to the eukaryotic ribosomal protein eS17 family.</text>
</comment>
<gene>
    <name type="primary">rps1701</name>
    <name type="synonym">rps17</name>
    <name type="synonym">rps17a</name>
    <name type="ORF">SPBC24E9.05c</name>
    <name type="ORF">SPBC839.05c</name>
</gene>
<sequence length="131" mass="15514">MGRVRTKTTKRASRVVIEKYYPRLTLDFQTNKRIVDEVAIIASKRLRNKIAGYTTHLMKRIQRGPVRGISFKLQEEERERKDQYVPEVSELEVDRVNVDQDTKDMLKSLGYDQIPVRVLAPAPQERFRRRQ</sequence>
<dbReference type="EMBL" id="CU329671">
    <property type="protein sequence ID" value="CAB46698.1"/>
    <property type="molecule type" value="Genomic_DNA"/>
</dbReference>
<dbReference type="PIR" id="T40712">
    <property type="entry name" value="T40712"/>
</dbReference>
<dbReference type="RefSeq" id="NP_595245.1">
    <property type="nucleotide sequence ID" value="NM_001021151.2"/>
</dbReference>
<dbReference type="PDB" id="9AXT">
    <property type="method" value="EM"/>
    <property type="resolution" value="2.40 A"/>
    <property type="chains" value="AU=1-131"/>
</dbReference>
<dbReference type="PDB" id="9AXV">
    <property type="method" value="EM"/>
    <property type="resolution" value="2.40 A"/>
    <property type="chains" value="AU=1-131"/>
</dbReference>
<dbReference type="PDBsum" id="9AXT"/>
<dbReference type="PDBsum" id="9AXV"/>
<dbReference type="EMDB" id="EMD-43972"/>
<dbReference type="EMDB" id="EMD-43976"/>
<dbReference type="SMR" id="O42984"/>
<dbReference type="BioGRID" id="277743">
    <property type="interactions" value="48"/>
</dbReference>
<dbReference type="FunCoup" id="O42984">
    <property type="interactions" value="539"/>
</dbReference>
<dbReference type="IntAct" id="O42984">
    <property type="interactions" value="1"/>
</dbReference>
<dbReference type="STRING" id="284812.O42984"/>
<dbReference type="iPTMnet" id="O42984"/>
<dbReference type="PaxDb" id="4896-SPBC839.05c.1"/>
<dbReference type="EnsemblFungi" id="SPBC839.05c.1">
    <property type="protein sequence ID" value="SPBC839.05c.1:pep"/>
    <property type="gene ID" value="SPBC839.05c"/>
</dbReference>
<dbReference type="GeneID" id="2541229"/>
<dbReference type="KEGG" id="spo:2541229"/>
<dbReference type="PomBase" id="SPBC839.05c">
    <property type="gene designation" value="rps1701"/>
</dbReference>
<dbReference type="VEuPathDB" id="FungiDB:SPBC839.05c"/>
<dbReference type="eggNOG" id="KOG0187">
    <property type="taxonomic scope" value="Eukaryota"/>
</dbReference>
<dbReference type="HOGENOM" id="CLU_112958_0_1_1"/>
<dbReference type="InParanoid" id="O42984"/>
<dbReference type="OMA" id="MKRIQQG"/>
<dbReference type="PhylomeDB" id="O42984"/>
<dbReference type="Reactome" id="R-SPO-156827">
    <property type="pathway name" value="L13a-mediated translational silencing of Ceruloplasmin expression"/>
</dbReference>
<dbReference type="Reactome" id="R-SPO-1799339">
    <property type="pathway name" value="SRP-dependent cotranslational protein targeting to membrane"/>
</dbReference>
<dbReference type="Reactome" id="R-SPO-72649">
    <property type="pathway name" value="Translation initiation complex formation"/>
</dbReference>
<dbReference type="Reactome" id="R-SPO-72689">
    <property type="pathway name" value="Formation of a pool of free 40S subunits"/>
</dbReference>
<dbReference type="Reactome" id="R-SPO-72695">
    <property type="pathway name" value="Formation of the ternary complex, and subsequently, the 43S complex"/>
</dbReference>
<dbReference type="Reactome" id="R-SPO-72702">
    <property type="pathway name" value="Ribosomal scanning and start codon recognition"/>
</dbReference>
<dbReference type="Reactome" id="R-SPO-72706">
    <property type="pathway name" value="GTP hydrolysis and joining of the 60S ribosomal subunit"/>
</dbReference>
<dbReference type="Reactome" id="R-SPO-975956">
    <property type="pathway name" value="Nonsense Mediated Decay (NMD) independent of the Exon Junction Complex (EJC)"/>
</dbReference>
<dbReference type="Reactome" id="R-SPO-975957">
    <property type="pathway name" value="Nonsense Mediated Decay (NMD) enhanced by the Exon Junction Complex (EJC)"/>
</dbReference>
<dbReference type="PRO" id="PR:O42984"/>
<dbReference type="Proteomes" id="UP000002485">
    <property type="component" value="Chromosome II"/>
</dbReference>
<dbReference type="GO" id="GO:0005829">
    <property type="term" value="C:cytosol"/>
    <property type="evidence" value="ECO:0007005"/>
    <property type="project" value="PomBase"/>
</dbReference>
<dbReference type="GO" id="GO:0022627">
    <property type="term" value="C:cytosolic small ribosomal subunit"/>
    <property type="evidence" value="ECO:0000269"/>
    <property type="project" value="PomBase"/>
</dbReference>
<dbReference type="GO" id="GO:0003735">
    <property type="term" value="F:structural constituent of ribosome"/>
    <property type="evidence" value="ECO:0000266"/>
    <property type="project" value="PomBase"/>
</dbReference>
<dbReference type="GO" id="GO:0002182">
    <property type="term" value="P:cytoplasmic translational elongation"/>
    <property type="evidence" value="ECO:0000303"/>
    <property type="project" value="PomBase"/>
</dbReference>
<dbReference type="GO" id="GO:0042254">
    <property type="term" value="P:ribosome biogenesis"/>
    <property type="evidence" value="ECO:0000266"/>
    <property type="project" value="PomBase"/>
</dbReference>
<dbReference type="FunFam" id="1.10.60.20:FF:000001">
    <property type="entry name" value="40S ribosomal protein S17"/>
    <property type="match status" value="1"/>
</dbReference>
<dbReference type="Gene3D" id="1.10.60.20">
    <property type="entry name" value="Ribosomal protein S17e-like"/>
    <property type="match status" value="1"/>
</dbReference>
<dbReference type="HAMAP" id="MF_00511">
    <property type="entry name" value="Ribosomal_eS17"/>
    <property type="match status" value="1"/>
</dbReference>
<dbReference type="InterPro" id="IPR001210">
    <property type="entry name" value="Ribosomal_eS17"/>
</dbReference>
<dbReference type="InterPro" id="IPR018273">
    <property type="entry name" value="Ribosomal_eS17_CS"/>
</dbReference>
<dbReference type="InterPro" id="IPR036401">
    <property type="entry name" value="Ribosomal_eS17_sf"/>
</dbReference>
<dbReference type="NCBIfam" id="NF002242">
    <property type="entry name" value="PRK01151.1"/>
    <property type="match status" value="1"/>
</dbReference>
<dbReference type="PANTHER" id="PTHR10732">
    <property type="entry name" value="40S RIBOSOMAL PROTEIN S17"/>
    <property type="match status" value="1"/>
</dbReference>
<dbReference type="PANTHER" id="PTHR10732:SF0">
    <property type="entry name" value="40S RIBOSOMAL PROTEIN S17"/>
    <property type="match status" value="1"/>
</dbReference>
<dbReference type="Pfam" id="PF00833">
    <property type="entry name" value="Ribosomal_S17e"/>
    <property type="match status" value="1"/>
</dbReference>
<dbReference type="SUPFAM" id="SSF116820">
    <property type="entry name" value="Rps17e-like"/>
    <property type="match status" value="1"/>
</dbReference>
<dbReference type="PROSITE" id="PS00712">
    <property type="entry name" value="RIBOSOMAL_S17E"/>
    <property type="match status" value="1"/>
</dbReference>
<accession>O42984</accession>
<name>RS17A_SCHPO</name>
<feature type="chain" id="PRO_0000141544" description="Small ribosomal subunit protein eS17A">
    <location>
        <begin position="1"/>
        <end position="131"/>
    </location>
</feature>
<keyword id="KW-0002">3D-structure</keyword>
<keyword id="KW-0963">Cytoplasm</keyword>
<keyword id="KW-1185">Reference proteome</keyword>
<keyword id="KW-0687">Ribonucleoprotein</keyword>
<keyword id="KW-0689">Ribosomal protein</keyword>
<organism>
    <name type="scientific">Schizosaccharomyces pombe (strain 972 / ATCC 24843)</name>
    <name type="common">Fission yeast</name>
    <dbReference type="NCBI Taxonomy" id="284812"/>
    <lineage>
        <taxon>Eukaryota</taxon>
        <taxon>Fungi</taxon>
        <taxon>Dikarya</taxon>
        <taxon>Ascomycota</taxon>
        <taxon>Taphrinomycotina</taxon>
        <taxon>Schizosaccharomycetes</taxon>
        <taxon>Schizosaccharomycetales</taxon>
        <taxon>Schizosaccharomycetaceae</taxon>
        <taxon>Schizosaccharomyces</taxon>
    </lineage>
</organism>